<accession>A6VM51</accession>
<protein>
    <recommendedName>
        <fullName evidence="1">Phosphopantetheine adenylyltransferase</fullName>
        <ecNumber evidence="1">2.7.7.3</ecNumber>
    </recommendedName>
    <alternativeName>
        <fullName evidence="1">Dephospho-CoA pyrophosphorylase</fullName>
    </alternativeName>
    <alternativeName>
        <fullName evidence="1">Pantetheine-phosphate adenylyltransferase</fullName>
        <shortName evidence="1">PPAT</shortName>
    </alternativeName>
</protein>
<feature type="chain" id="PRO_1000071518" description="Phosphopantetheine adenylyltransferase">
    <location>
        <begin position="1"/>
        <end position="161"/>
    </location>
</feature>
<feature type="binding site" evidence="1">
    <location>
        <begin position="9"/>
        <end position="10"/>
    </location>
    <ligand>
        <name>ATP</name>
        <dbReference type="ChEBI" id="CHEBI:30616"/>
    </ligand>
</feature>
<feature type="binding site" evidence="1">
    <location>
        <position position="9"/>
    </location>
    <ligand>
        <name>substrate</name>
    </ligand>
</feature>
<feature type="binding site" evidence="1">
    <location>
        <position position="17"/>
    </location>
    <ligand>
        <name>ATP</name>
        <dbReference type="ChEBI" id="CHEBI:30616"/>
    </ligand>
</feature>
<feature type="binding site" evidence="1">
    <location>
        <position position="41"/>
    </location>
    <ligand>
        <name>substrate</name>
    </ligand>
</feature>
<feature type="binding site" evidence="1">
    <location>
        <position position="73"/>
    </location>
    <ligand>
        <name>substrate</name>
    </ligand>
</feature>
<feature type="binding site" evidence="1">
    <location>
        <position position="87"/>
    </location>
    <ligand>
        <name>substrate</name>
    </ligand>
</feature>
<feature type="binding site" evidence="1">
    <location>
        <begin position="88"/>
        <end position="90"/>
    </location>
    <ligand>
        <name>ATP</name>
        <dbReference type="ChEBI" id="CHEBI:30616"/>
    </ligand>
</feature>
<feature type="binding site" evidence="1">
    <location>
        <position position="98"/>
    </location>
    <ligand>
        <name>ATP</name>
        <dbReference type="ChEBI" id="CHEBI:30616"/>
    </ligand>
</feature>
<feature type="binding site" evidence="1">
    <location>
        <begin position="123"/>
        <end position="129"/>
    </location>
    <ligand>
        <name>ATP</name>
        <dbReference type="ChEBI" id="CHEBI:30616"/>
    </ligand>
</feature>
<feature type="site" description="Transition state stabilizer" evidence="1">
    <location>
        <position position="17"/>
    </location>
</feature>
<dbReference type="EC" id="2.7.7.3" evidence="1"/>
<dbReference type="EMBL" id="CP000746">
    <property type="protein sequence ID" value="ABR74048.1"/>
    <property type="molecule type" value="Genomic_DNA"/>
</dbReference>
<dbReference type="RefSeq" id="WP_012072428.1">
    <property type="nucleotide sequence ID" value="NC_009655.1"/>
</dbReference>
<dbReference type="SMR" id="A6VM51"/>
<dbReference type="STRING" id="339671.Asuc_0675"/>
<dbReference type="KEGG" id="asu:Asuc_0675"/>
<dbReference type="eggNOG" id="COG0669">
    <property type="taxonomic scope" value="Bacteria"/>
</dbReference>
<dbReference type="HOGENOM" id="CLU_100149_0_1_6"/>
<dbReference type="OrthoDB" id="9806661at2"/>
<dbReference type="UniPathway" id="UPA00241">
    <property type="reaction ID" value="UER00355"/>
</dbReference>
<dbReference type="Proteomes" id="UP000001114">
    <property type="component" value="Chromosome"/>
</dbReference>
<dbReference type="GO" id="GO:0005737">
    <property type="term" value="C:cytoplasm"/>
    <property type="evidence" value="ECO:0007669"/>
    <property type="project" value="UniProtKB-SubCell"/>
</dbReference>
<dbReference type="GO" id="GO:0005524">
    <property type="term" value="F:ATP binding"/>
    <property type="evidence" value="ECO:0007669"/>
    <property type="project" value="UniProtKB-KW"/>
</dbReference>
<dbReference type="GO" id="GO:0004595">
    <property type="term" value="F:pantetheine-phosphate adenylyltransferase activity"/>
    <property type="evidence" value="ECO:0007669"/>
    <property type="project" value="UniProtKB-UniRule"/>
</dbReference>
<dbReference type="GO" id="GO:0015937">
    <property type="term" value="P:coenzyme A biosynthetic process"/>
    <property type="evidence" value="ECO:0007669"/>
    <property type="project" value="UniProtKB-UniRule"/>
</dbReference>
<dbReference type="CDD" id="cd02163">
    <property type="entry name" value="PPAT"/>
    <property type="match status" value="1"/>
</dbReference>
<dbReference type="Gene3D" id="3.40.50.620">
    <property type="entry name" value="HUPs"/>
    <property type="match status" value="1"/>
</dbReference>
<dbReference type="HAMAP" id="MF_00151">
    <property type="entry name" value="PPAT_bact"/>
    <property type="match status" value="1"/>
</dbReference>
<dbReference type="InterPro" id="IPR004821">
    <property type="entry name" value="Cyt_trans-like"/>
</dbReference>
<dbReference type="InterPro" id="IPR001980">
    <property type="entry name" value="PPAT"/>
</dbReference>
<dbReference type="InterPro" id="IPR014729">
    <property type="entry name" value="Rossmann-like_a/b/a_fold"/>
</dbReference>
<dbReference type="NCBIfam" id="TIGR01510">
    <property type="entry name" value="coaD_prev_kdtB"/>
    <property type="match status" value="1"/>
</dbReference>
<dbReference type="NCBIfam" id="TIGR00125">
    <property type="entry name" value="cyt_tran_rel"/>
    <property type="match status" value="1"/>
</dbReference>
<dbReference type="PANTHER" id="PTHR21342">
    <property type="entry name" value="PHOSPHOPANTETHEINE ADENYLYLTRANSFERASE"/>
    <property type="match status" value="1"/>
</dbReference>
<dbReference type="PANTHER" id="PTHR21342:SF1">
    <property type="entry name" value="PHOSPHOPANTETHEINE ADENYLYLTRANSFERASE"/>
    <property type="match status" value="1"/>
</dbReference>
<dbReference type="Pfam" id="PF01467">
    <property type="entry name" value="CTP_transf_like"/>
    <property type="match status" value="1"/>
</dbReference>
<dbReference type="PRINTS" id="PR01020">
    <property type="entry name" value="LPSBIOSNTHSS"/>
</dbReference>
<dbReference type="SUPFAM" id="SSF52374">
    <property type="entry name" value="Nucleotidylyl transferase"/>
    <property type="match status" value="1"/>
</dbReference>
<evidence type="ECO:0000255" key="1">
    <source>
        <dbReference type="HAMAP-Rule" id="MF_00151"/>
    </source>
</evidence>
<organism>
    <name type="scientific">Actinobacillus succinogenes (strain ATCC 55618 / DSM 22257 / CCUG 43843 / 130Z)</name>
    <dbReference type="NCBI Taxonomy" id="339671"/>
    <lineage>
        <taxon>Bacteria</taxon>
        <taxon>Pseudomonadati</taxon>
        <taxon>Pseudomonadota</taxon>
        <taxon>Gammaproteobacteria</taxon>
        <taxon>Pasteurellales</taxon>
        <taxon>Pasteurellaceae</taxon>
        <taxon>Actinobacillus</taxon>
    </lineage>
</organism>
<proteinExistence type="inferred from homology"/>
<gene>
    <name evidence="1" type="primary">coaD</name>
    <name type="ordered locus">Asuc_0675</name>
</gene>
<reference key="1">
    <citation type="journal article" date="2010" name="BMC Genomics">
        <title>A genomic perspective on the potential of Actinobacillus succinogenes for industrial succinate production.</title>
        <authorList>
            <person name="McKinlay J.B."/>
            <person name="Laivenieks M."/>
            <person name="Schindler B.D."/>
            <person name="McKinlay A.A."/>
            <person name="Siddaramappa S."/>
            <person name="Challacombe J.F."/>
            <person name="Lowry S.R."/>
            <person name="Clum A."/>
            <person name="Lapidus A.L."/>
            <person name="Burkhart K.B."/>
            <person name="Harkins V."/>
            <person name="Vieille C."/>
        </authorList>
    </citation>
    <scope>NUCLEOTIDE SEQUENCE [LARGE SCALE GENOMIC DNA]</scope>
    <source>
        <strain>ATCC 55618 / DSM 22257 / CCUG 43843 / 130Z</strain>
    </source>
</reference>
<sequence length="161" mass="18006">MKTVIYPGTFDPITNGHLDIIERTAVLFPQVIVAVAASPTKKPLFDLQDRVQLAEESVAHLPNVRVIGFSGLLADAVKEHDITAIIRGMRTTMDFEYELQLAHLNRVLSQGVESLFLPSTEQWSYVSSTIVREIYLHNGNVDQFVPPPVLNALNRRRKADA</sequence>
<comment type="function">
    <text evidence="1">Reversibly transfers an adenylyl group from ATP to 4'-phosphopantetheine, yielding dephospho-CoA (dPCoA) and pyrophosphate.</text>
</comment>
<comment type="catalytic activity">
    <reaction evidence="1">
        <text>(R)-4'-phosphopantetheine + ATP + H(+) = 3'-dephospho-CoA + diphosphate</text>
        <dbReference type="Rhea" id="RHEA:19801"/>
        <dbReference type="ChEBI" id="CHEBI:15378"/>
        <dbReference type="ChEBI" id="CHEBI:30616"/>
        <dbReference type="ChEBI" id="CHEBI:33019"/>
        <dbReference type="ChEBI" id="CHEBI:57328"/>
        <dbReference type="ChEBI" id="CHEBI:61723"/>
        <dbReference type="EC" id="2.7.7.3"/>
    </reaction>
</comment>
<comment type="cofactor">
    <cofactor evidence="1">
        <name>Mg(2+)</name>
        <dbReference type="ChEBI" id="CHEBI:18420"/>
    </cofactor>
</comment>
<comment type="pathway">
    <text evidence="1">Cofactor biosynthesis; coenzyme A biosynthesis; CoA from (R)-pantothenate: step 4/5.</text>
</comment>
<comment type="subunit">
    <text evidence="1">Homohexamer.</text>
</comment>
<comment type="subcellular location">
    <subcellularLocation>
        <location evidence="1">Cytoplasm</location>
    </subcellularLocation>
</comment>
<comment type="similarity">
    <text evidence="1">Belongs to the bacterial CoaD family.</text>
</comment>
<keyword id="KW-0067">ATP-binding</keyword>
<keyword id="KW-0173">Coenzyme A biosynthesis</keyword>
<keyword id="KW-0963">Cytoplasm</keyword>
<keyword id="KW-0460">Magnesium</keyword>
<keyword id="KW-0547">Nucleotide-binding</keyword>
<keyword id="KW-0548">Nucleotidyltransferase</keyword>
<keyword id="KW-1185">Reference proteome</keyword>
<keyword id="KW-0808">Transferase</keyword>
<name>COAD_ACTSZ</name>